<name>SNAPN_VANPO</name>
<reference key="1">
    <citation type="journal article" date="2007" name="Proc. Natl. Acad. Sci. U.S.A.">
        <title>Independent sorting-out of thousands of duplicated gene pairs in two yeast species descended from a whole-genome duplication.</title>
        <authorList>
            <person name="Scannell D.R."/>
            <person name="Frank A.C."/>
            <person name="Conant G.C."/>
            <person name="Byrne K.P."/>
            <person name="Woolfit M."/>
            <person name="Wolfe K.H."/>
        </authorList>
    </citation>
    <scope>NUCLEOTIDE SEQUENCE [LARGE SCALE GENOMIC DNA]</scope>
    <source>
        <strain>ATCC 22028 / DSM 70294 / BCRC 21397 / CBS 2163 / NBRC 10782 / NRRL Y-8283 / UCD 57-17</strain>
    </source>
</reference>
<proteinExistence type="inferred from homology"/>
<comment type="function">
    <text evidence="1">Component of the biogenesis of lysosome-related organelles complex-1 (BLOC-1), a complex involved in endosomal cargo sorting.</text>
</comment>
<comment type="subunit">
    <text evidence="1">Component of the biogenesis of lysosome-related organelles complex-1 (BLOC-1).</text>
</comment>
<comment type="subcellular location">
    <subcellularLocation>
        <location evidence="1">Endosome</location>
    </subcellularLocation>
</comment>
<comment type="similarity">
    <text evidence="3">Belongs to the SNAPIN family.</text>
</comment>
<sequence>MDSESANSVHPVELCVYSTLSSDLDSIYQAISELRRSQAMLLFTIRKIRDSIKEENDSLYEIQDLEIPIQRLNDLTKRANNLQRKYDLLKEKTSRLAKKEDEE</sequence>
<evidence type="ECO:0000250" key="1"/>
<evidence type="ECO:0000255" key="2"/>
<evidence type="ECO:0000305" key="3"/>
<protein>
    <recommendedName>
        <fullName>Biogenesis of lysosome-related organelles complex 1 subunit SNN1</fullName>
        <shortName>BLOC-1 subunit SNN1</shortName>
    </recommendedName>
    <alternativeName>
        <fullName>SNAPIN-like protein 1</fullName>
    </alternativeName>
</protein>
<feature type="chain" id="PRO_0000410660" description="Biogenesis of lysosome-related organelles complex 1 subunit SNN1">
    <location>
        <begin position="1"/>
        <end position="103"/>
    </location>
</feature>
<feature type="coiled-coil region" evidence="2">
    <location>
        <begin position="69"/>
        <end position="102"/>
    </location>
</feature>
<keyword id="KW-0175">Coiled coil</keyword>
<keyword id="KW-0967">Endosome</keyword>
<keyword id="KW-1185">Reference proteome</keyword>
<keyword id="KW-0813">Transport</keyword>
<dbReference type="EMBL" id="DS480414">
    <property type="protein sequence ID" value="EDO16932.1"/>
    <property type="molecule type" value="Genomic_DNA"/>
</dbReference>
<dbReference type="RefSeq" id="XP_001644790.1">
    <property type="nucleotide sequence ID" value="XM_001644740.1"/>
</dbReference>
<dbReference type="SMR" id="A7TLF1"/>
<dbReference type="FunCoup" id="A7TLF1">
    <property type="interactions" value="33"/>
</dbReference>
<dbReference type="STRING" id="436907.A7TLF1"/>
<dbReference type="GeneID" id="5545119"/>
<dbReference type="KEGG" id="vpo:Kpol_1020p41"/>
<dbReference type="eggNOG" id="ENOG502S7PY">
    <property type="taxonomic scope" value="Eukaryota"/>
</dbReference>
<dbReference type="HOGENOM" id="CLU_178727_0_0_1"/>
<dbReference type="InParanoid" id="A7TLF1"/>
<dbReference type="OMA" id="IHPIELC"/>
<dbReference type="OrthoDB" id="4065244at2759"/>
<dbReference type="PhylomeDB" id="A7TLF1"/>
<dbReference type="Proteomes" id="UP000000267">
    <property type="component" value="Unassembled WGS sequence"/>
</dbReference>
<dbReference type="GO" id="GO:0031083">
    <property type="term" value="C:BLOC-1 complex"/>
    <property type="evidence" value="ECO:0007669"/>
    <property type="project" value="EnsemblFungi"/>
</dbReference>
<dbReference type="GO" id="GO:0005768">
    <property type="term" value="C:endosome"/>
    <property type="evidence" value="ECO:0007669"/>
    <property type="project" value="UniProtKB-SubCell"/>
</dbReference>
<dbReference type="GO" id="GO:0007032">
    <property type="term" value="P:endosome organization"/>
    <property type="evidence" value="ECO:0007669"/>
    <property type="project" value="EnsemblFungi"/>
</dbReference>
<dbReference type="GO" id="GO:0032880">
    <property type="term" value="P:regulation of protein localization"/>
    <property type="evidence" value="ECO:0007669"/>
    <property type="project" value="EnsemblFungi"/>
</dbReference>
<gene>
    <name type="primary">SNN1</name>
    <name type="ORF">Kpol_1020p41</name>
</gene>
<accession>A7TLF1</accession>
<organism>
    <name type="scientific">Vanderwaltozyma polyspora (strain ATCC 22028 / DSM 70294 / BCRC 21397 / CBS 2163 / NBRC 10782 / NRRL Y-8283 / UCD 57-17)</name>
    <name type="common">Kluyveromyces polysporus</name>
    <dbReference type="NCBI Taxonomy" id="436907"/>
    <lineage>
        <taxon>Eukaryota</taxon>
        <taxon>Fungi</taxon>
        <taxon>Dikarya</taxon>
        <taxon>Ascomycota</taxon>
        <taxon>Saccharomycotina</taxon>
        <taxon>Saccharomycetes</taxon>
        <taxon>Saccharomycetales</taxon>
        <taxon>Saccharomycetaceae</taxon>
        <taxon>Vanderwaltozyma</taxon>
    </lineage>
</organism>